<proteinExistence type="evidence at protein level"/>
<evidence type="ECO:0000250" key="1"/>
<evidence type="ECO:0000250" key="2">
    <source>
        <dbReference type="UniProtKB" id="P60208"/>
    </source>
</evidence>
<evidence type="ECO:0000250" key="3">
    <source>
        <dbReference type="UniProtKB" id="P84777"/>
    </source>
</evidence>
<evidence type="ECO:0000250" key="4">
    <source>
        <dbReference type="UniProtKB" id="Q86BX0"/>
    </source>
</evidence>
<evidence type="ECO:0000250" key="5">
    <source>
        <dbReference type="UniProtKB" id="Q8I0L5"/>
    </source>
</evidence>
<evidence type="ECO:0000269" key="6">
    <source>
    </source>
</evidence>
<evidence type="ECO:0000269" key="7">
    <source>
    </source>
</evidence>
<evidence type="ECO:0000303" key="8">
    <source>
    </source>
</evidence>
<evidence type="ECO:0000305" key="9"/>
<evidence type="ECO:0000305" key="10">
    <source>
    </source>
</evidence>
<comment type="function">
    <text evidence="2 6 7">Blocker of voltage-gated potassium channels (600 nM of the toxin induces a block of 25% of hERG currents) (PubMed:18687312). May also inhibit Kv4/KCND when coexpressed with DPP6 or DPP10 (By similarity). In adult rat brain, it blocks the transient potassium channels in cerebellum granular cells. Blocks potassium channels by a simple 'plugging mechanism', in which a single toxin molecule finds a specific receptor site in the external vestibule of the potassium channel and thereby occludes the outer entry to the potassium conducting pore (PubMed:11018665).</text>
</comment>
<comment type="subcellular location">
    <subcellularLocation>
        <location evidence="6">Secreted</location>
    </subcellularLocation>
</comment>
<comment type="tissue specificity">
    <text evidence="9">Expressed by the venom gland.</text>
</comment>
<comment type="domain">
    <text evidence="3">Has the structural arrangement of an alpha-helix connected to a beta-sheet by disulfide bonds (CSalpha/beta).</text>
</comment>
<comment type="similarity">
    <text evidence="9">Belongs to the short scorpion toxin superfamily. Potassium channel inhibitor family. Alpha-KTx 15 subfamily.</text>
</comment>
<reference key="1">
    <citation type="journal article" date="2000" name="Biochim. Biophys. Acta">
        <title>Fast K(+) currents from cerebellum granular cells are completely blocked by a peptide purified from Androctonus australis Garzoni scorpion venom.</title>
        <authorList>
            <person name="Pisciotta M."/>
            <person name="Coronas F.I."/>
            <person name="Bloch C. Jr."/>
            <person name="Prestipino G."/>
            <person name="Possani L.D."/>
        </authorList>
    </citation>
    <scope>PROTEIN SEQUENCE</scope>
    <scope>FUNCTION</scope>
    <scope>SUBCELLULAR LOCATION</scope>
    <source>
        <tissue>Venom</tissue>
    </source>
</reference>
<reference key="2">
    <citation type="journal article" date="2008" name="Biochem. Pharmacol.">
        <title>A common 'hot spot' confers hERG blockade activity to alpha-scorpion toxins affecting K+ channels.</title>
        <authorList>
            <person name="Abdel-Mottaleb Y."/>
            <person name="Corzo G."/>
            <person name="Martin-Eauclaire M.F."/>
            <person name="Satake H."/>
            <person name="Ceard B."/>
            <person name="Peigneur S."/>
            <person name="Nambaru P."/>
            <person name="Bougis P.E."/>
            <person name="Possani L.D."/>
            <person name="Tytgat J."/>
        </authorList>
    </citation>
    <scope>FUNCTION</scope>
    <source>
        <tissue>Venom</tissue>
    </source>
</reference>
<name>KA151_ANDAU</name>
<sequence>QNETNKKCQGGSCASVCRRVIGVAAGKCINGRCVCYP</sequence>
<keyword id="KW-0903">Direct protein sequencing</keyword>
<keyword id="KW-1015">Disulfide bond</keyword>
<keyword id="KW-0872">Ion channel impairing toxin</keyword>
<keyword id="KW-0528">Neurotoxin</keyword>
<keyword id="KW-0632">Potassium channel impairing toxin</keyword>
<keyword id="KW-0873">Pyrrolidone carboxylic acid</keyword>
<keyword id="KW-0964">Secreted</keyword>
<keyword id="KW-0800">Toxin</keyword>
<keyword id="KW-1220">Voltage-gated potassium channel impairing toxin</keyword>
<protein>
    <recommendedName>
        <fullName evidence="9">Potassium channel toxin alpha-KTx 15.1</fullName>
    </recommendedName>
    <alternativeName>
        <fullName evidence="8">Peptide Aa1</fullName>
    </alternativeName>
</protein>
<dbReference type="SMR" id="P60233"/>
<dbReference type="GO" id="GO:0005576">
    <property type="term" value="C:extracellular region"/>
    <property type="evidence" value="ECO:0007669"/>
    <property type="project" value="UniProtKB-SubCell"/>
</dbReference>
<dbReference type="GO" id="GO:0008200">
    <property type="term" value="F:ion channel inhibitor activity"/>
    <property type="evidence" value="ECO:0007669"/>
    <property type="project" value="InterPro"/>
</dbReference>
<dbReference type="GO" id="GO:0015459">
    <property type="term" value="F:potassium channel regulator activity"/>
    <property type="evidence" value="ECO:0007669"/>
    <property type="project" value="UniProtKB-KW"/>
</dbReference>
<dbReference type="GO" id="GO:0090729">
    <property type="term" value="F:toxin activity"/>
    <property type="evidence" value="ECO:0007669"/>
    <property type="project" value="UniProtKB-KW"/>
</dbReference>
<dbReference type="Gene3D" id="3.30.30.10">
    <property type="entry name" value="Knottin, scorpion toxin-like"/>
    <property type="match status" value="1"/>
</dbReference>
<dbReference type="InterPro" id="IPR036574">
    <property type="entry name" value="Scorpion_toxin-like_sf"/>
</dbReference>
<dbReference type="InterPro" id="IPR001947">
    <property type="entry name" value="Scorpion_toxinS_K_inh"/>
</dbReference>
<dbReference type="Pfam" id="PF00451">
    <property type="entry name" value="Toxin_2"/>
    <property type="match status" value="1"/>
</dbReference>
<dbReference type="SUPFAM" id="SSF57095">
    <property type="entry name" value="Scorpion toxin-like"/>
    <property type="match status" value="1"/>
</dbReference>
<dbReference type="PROSITE" id="PS01138">
    <property type="entry name" value="SCORP_SHORT_TOXIN"/>
    <property type="match status" value="1"/>
</dbReference>
<feature type="peptide" id="PRO_0000044896" description="Potassium channel toxin alpha-KTx 15.1" evidence="6">
    <location>
        <begin position="1"/>
        <end position="37"/>
    </location>
</feature>
<feature type="site" description="Hot spot basic residue in hERG blocking currents" evidence="10">
    <location>
        <position position="6"/>
    </location>
</feature>
<feature type="site" description="Hot spot basic residue in hERG blocking currents" evidence="10">
    <location>
        <position position="18"/>
    </location>
</feature>
<feature type="site" description="Hot spot basic residue in hERG blocking currents" evidence="10">
    <location>
        <position position="19"/>
    </location>
</feature>
<feature type="site" description="Basic residue of the functional dyad" evidence="1">
    <location>
        <position position="27"/>
    </location>
</feature>
<feature type="site" description="Aromatic residue of the functional dyad" evidence="1">
    <location>
        <position position="36"/>
    </location>
</feature>
<feature type="modified residue" description="Pyrrolidone carboxylic acid" evidence="5">
    <location>
        <position position="1"/>
    </location>
</feature>
<feature type="disulfide bond" evidence="4">
    <location>
        <begin position="8"/>
        <end position="28"/>
    </location>
</feature>
<feature type="disulfide bond" evidence="4">
    <location>
        <begin position="13"/>
        <end position="33"/>
    </location>
</feature>
<feature type="disulfide bond" evidence="4">
    <location>
        <begin position="17"/>
        <end position="35"/>
    </location>
</feature>
<accession>P60233</accession>
<organism>
    <name type="scientific">Androctonus australis</name>
    <name type="common">Sahara scorpion</name>
    <dbReference type="NCBI Taxonomy" id="6858"/>
    <lineage>
        <taxon>Eukaryota</taxon>
        <taxon>Metazoa</taxon>
        <taxon>Ecdysozoa</taxon>
        <taxon>Arthropoda</taxon>
        <taxon>Chelicerata</taxon>
        <taxon>Arachnida</taxon>
        <taxon>Scorpiones</taxon>
        <taxon>Buthida</taxon>
        <taxon>Buthoidea</taxon>
        <taxon>Buthidae</taxon>
        <taxon>Androctonus</taxon>
    </lineage>
</organism>